<reference key="1">
    <citation type="journal article" date="2002" name="Nature">
        <title>Genome sequence of the plant pathogen Ralstonia solanacearum.</title>
        <authorList>
            <person name="Salanoubat M."/>
            <person name="Genin S."/>
            <person name="Artiguenave F."/>
            <person name="Gouzy J."/>
            <person name="Mangenot S."/>
            <person name="Arlat M."/>
            <person name="Billault A."/>
            <person name="Brottier P."/>
            <person name="Camus J.-C."/>
            <person name="Cattolico L."/>
            <person name="Chandler M."/>
            <person name="Choisne N."/>
            <person name="Claudel-Renard C."/>
            <person name="Cunnac S."/>
            <person name="Demange N."/>
            <person name="Gaspin C."/>
            <person name="Lavie M."/>
            <person name="Moisan A."/>
            <person name="Robert C."/>
            <person name="Saurin W."/>
            <person name="Schiex T."/>
            <person name="Siguier P."/>
            <person name="Thebault P."/>
            <person name="Whalen M."/>
            <person name="Wincker P."/>
            <person name="Levy M."/>
            <person name="Weissenbach J."/>
            <person name="Boucher C.A."/>
        </authorList>
    </citation>
    <scope>NUCLEOTIDE SEQUENCE [LARGE SCALE GENOMIC DNA]</scope>
    <source>
        <strain>ATCC BAA-1114 / GMI1000</strain>
    </source>
</reference>
<protein>
    <recommendedName>
        <fullName>High-potential iron-sulfur protein</fullName>
        <shortName>HiPIP</shortName>
    </recommendedName>
</protein>
<keyword id="KW-0004">4Fe-4S</keyword>
<keyword id="KW-0249">Electron transport</keyword>
<keyword id="KW-0408">Iron</keyword>
<keyword id="KW-0411">Iron-sulfur</keyword>
<keyword id="KW-0479">Metal-binding</keyword>
<keyword id="KW-0574">Periplasm</keyword>
<keyword id="KW-1185">Reference proteome</keyword>
<keyword id="KW-0732">Signal</keyword>
<keyword id="KW-0813">Transport</keyword>
<comment type="function">
    <text evidence="3">Specific class of high-redox-potential 4Fe-4S ferredoxins. Functions in anaerobic electron transport in most purple and in some other photosynthetic bacteria and in at least one genus (Paracoccus) of halophilic, denitrifying bacteria.</text>
</comment>
<comment type="subunit">
    <text evidence="1">Homodimer.</text>
</comment>
<comment type="subcellular location">
    <subcellularLocation>
        <location evidence="3">Periplasm</location>
    </subcellularLocation>
</comment>
<comment type="similarity">
    <text evidence="3">Belongs to the high-potential iron-sulfur protein (HiPIP) family.</text>
</comment>
<accession>Q8XUU7</accession>
<dbReference type="EMBL" id="AL646052">
    <property type="protein sequence ID" value="CAD16795.1"/>
    <property type="molecule type" value="Genomic_DNA"/>
</dbReference>
<dbReference type="RefSeq" id="WP_011002979.1">
    <property type="nucleotide sequence ID" value="NC_003295.1"/>
</dbReference>
<dbReference type="SMR" id="Q8XUU7"/>
<dbReference type="STRING" id="267608.RSc3086"/>
<dbReference type="EnsemblBacteria" id="CAD16795">
    <property type="protein sequence ID" value="CAD16795"/>
    <property type="gene ID" value="RSc3086"/>
</dbReference>
<dbReference type="KEGG" id="rso:RSc3086"/>
<dbReference type="eggNOG" id="ENOG50330XW">
    <property type="taxonomic scope" value="Bacteria"/>
</dbReference>
<dbReference type="HOGENOM" id="CLU_147871_0_0_4"/>
<dbReference type="Proteomes" id="UP000001436">
    <property type="component" value="Chromosome"/>
</dbReference>
<dbReference type="GO" id="GO:0042597">
    <property type="term" value="C:periplasmic space"/>
    <property type="evidence" value="ECO:0007669"/>
    <property type="project" value="UniProtKB-SubCell"/>
</dbReference>
<dbReference type="GO" id="GO:0051539">
    <property type="term" value="F:4 iron, 4 sulfur cluster binding"/>
    <property type="evidence" value="ECO:0007669"/>
    <property type="project" value="UniProtKB-KW"/>
</dbReference>
<dbReference type="GO" id="GO:0009055">
    <property type="term" value="F:electron transfer activity"/>
    <property type="evidence" value="ECO:0007669"/>
    <property type="project" value="InterPro"/>
</dbReference>
<dbReference type="GO" id="GO:0046872">
    <property type="term" value="F:metal ion binding"/>
    <property type="evidence" value="ECO:0007669"/>
    <property type="project" value="UniProtKB-KW"/>
</dbReference>
<dbReference type="GO" id="GO:0019646">
    <property type="term" value="P:aerobic electron transport chain"/>
    <property type="evidence" value="ECO:0007669"/>
    <property type="project" value="InterPro"/>
</dbReference>
<dbReference type="Gene3D" id="4.10.490.10">
    <property type="entry name" value="High potential iron-sulphur protein"/>
    <property type="match status" value="1"/>
</dbReference>
<dbReference type="InterPro" id="IPR000170">
    <property type="entry name" value="High_potential_FeS_prot"/>
</dbReference>
<dbReference type="InterPro" id="IPR036369">
    <property type="entry name" value="HIPIP_sf"/>
</dbReference>
<dbReference type="InterPro" id="IPR006311">
    <property type="entry name" value="TAT_signal"/>
</dbReference>
<dbReference type="Pfam" id="PF01355">
    <property type="entry name" value="HIPIP"/>
    <property type="match status" value="1"/>
</dbReference>
<dbReference type="SUPFAM" id="SSF57652">
    <property type="entry name" value="HIPIP (high potential iron protein)"/>
    <property type="match status" value="1"/>
</dbReference>
<dbReference type="PROSITE" id="PS51373">
    <property type="entry name" value="HIPIP"/>
    <property type="match status" value="1"/>
</dbReference>
<dbReference type="PROSITE" id="PS51318">
    <property type="entry name" value="TAT"/>
    <property type="match status" value="1"/>
</dbReference>
<organism>
    <name type="scientific">Ralstonia nicotianae (strain ATCC BAA-1114 / GMI1000)</name>
    <name type="common">Ralstonia solanacearum</name>
    <dbReference type="NCBI Taxonomy" id="267608"/>
    <lineage>
        <taxon>Bacteria</taxon>
        <taxon>Pseudomonadati</taxon>
        <taxon>Pseudomonadota</taxon>
        <taxon>Betaproteobacteria</taxon>
        <taxon>Burkholderiales</taxon>
        <taxon>Burkholderiaceae</taxon>
        <taxon>Ralstonia</taxon>
        <taxon>Ralstonia solanacearum species complex</taxon>
    </lineage>
</organism>
<gene>
    <name type="primary">hip</name>
    <name type="synonym">hpiS</name>
    <name type="ordered locus">RSc3086</name>
    <name type="ORF">RS00538</name>
</gene>
<name>HIP_RALN1</name>
<sequence length="103" mass="10622">MSNRRLFLKSIPIMAAAGAVGMAGLARAANPMVAETDPQAAALGYKADTTKVDQAKYPKHAPDQHCGNCALYQGGTAAQGGCPLFAGKDVANKGWCSAWAKKA</sequence>
<feature type="signal peptide" evidence="2">
    <location>
        <begin position="1"/>
        <end position="28"/>
    </location>
</feature>
<feature type="chain" id="PRO_0000013439" description="High-potential iron-sulfur protein">
    <location>
        <begin position="29"/>
        <end position="103"/>
    </location>
</feature>
<feature type="binding site" evidence="3">
    <location>
        <position position="66"/>
    </location>
    <ligand>
        <name>[4Fe-4S] cluster</name>
        <dbReference type="ChEBI" id="CHEBI:49883"/>
    </ligand>
</feature>
<feature type="binding site" evidence="3">
    <location>
        <position position="69"/>
    </location>
    <ligand>
        <name>[4Fe-4S] cluster</name>
        <dbReference type="ChEBI" id="CHEBI:49883"/>
    </ligand>
</feature>
<feature type="binding site" evidence="3">
    <location>
        <position position="82"/>
    </location>
    <ligand>
        <name>[4Fe-4S] cluster</name>
        <dbReference type="ChEBI" id="CHEBI:49883"/>
    </ligand>
</feature>
<feature type="binding site" evidence="3">
    <location>
        <position position="96"/>
    </location>
    <ligand>
        <name>[4Fe-4S] cluster</name>
        <dbReference type="ChEBI" id="CHEBI:49883"/>
    </ligand>
</feature>
<evidence type="ECO:0000250" key="1"/>
<evidence type="ECO:0000255" key="2"/>
<evidence type="ECO:0000255" key="3">
    <source>
        <dbReference type="PROSITE-ProRule" id="PRU00705"/>
    </source>
</evidence>
<proteinExistence type="inferred from homology"/>